<protein>
    <recommendedName>
        <fullName>Germin-like protein subfamily 1 member 14</fullName>
    </recommendedName>
</protein>
<reference key="1">
    <citation type="journal article" date="1998" name="DNA Res.">
        <title>Structural analysis of Arabidopsis thaliana chromosome 5. VIII. Sequence features of the regions of 1,081,958 bp covered by seventeen physically assigned P1 and TAC clones.</title>
        <authorList>
            <person name="Asamizu E."/>
            <person name="Sato S."/>
            <person name="Kaneko T."/>
            <person name="Nakamura Y."/>
            <person name="Kotani H."/>
            <person name="Miyajima N."/>
            <person name="Tabata S."/>
        </authorList>
    </citation>
    <scope>NUCLEOTIDE SEQUENCE [LARGE SCALE GENOMIC DNA]</scope>
    <source>
        <strain>cv. Columbia</strain>
    </source>
</reference>
<reference key="2">
    <citation type="journal article" date="2017" name="Plant J.">
        <title>Araport11: a complete reannotation of the Arabidopsis thaliana reference genome.</title>
        <authorList>
            <person name="Cheng C.Y."/>
            <person name="Krishnakumar V."/>
            <person name="Chan A.P."/>
            <person name="Thibaud-Nissen F."/>
            <person name="Schobel S."/>
            <person name="Town C.D."/>
        </authorList>
    </citation>
    <scope>GENOME REANNOTATION</scope>
    <source>
        <strain>cv. Columbia</strain>
    </source>
</reference>
<comment type="function">
    <text>May play a role in plant defense. Probably has no oxalate oxidase activity even if the active site is conserved.</text>
</comment>
<comment type="subunit">
    <text evidence="1">Oligomer (believed to be a pentamer but probably hexamer).</text>
</comment>
<comment type="subcellular location">
    <subcellularLocation>
        <location evidence="1">Secreted</location>
        <location evidence="1">Extracellular space</location>
        <location evidence="1">Apoplast</location>
    </subcellularLocation>
</comment>
<comment type="similarity">
    <text evidence="3">Belongs to the germin family.</text>
</comment>
<accession>Q9FID0</accession>
<proteinExistence type="inferred from homology"/>
<gene>
    <name type="ordered locus">At5g39110</name>
    <name type="ORF">MXF12.14</name>
    <name type="ORF">MXF12_120</name>
</gene>
<organism>
    <name type="scientific">Arabidopsis thaliana</name>
    <name type="common">Mouse-ear cress</name>
    <dbReference type="NCBI Taxonomy" id="3702"/>
    <lineage>
        <taxon>Eukaryota</taxon>
        <taxon>Viridiplantae</taxon>
        <taxon>Streptophyta</taxon>
        <taxon>Embryophyta</taxon>
        <taxon>Tracheophyta</taxon>
        <taxon>Spermatophyta</taxon>
        <taxon>Magnoliopsida</taxon>
        <taxon>eudicotyledons</taxon>
        <taxon>Gunneridae</taxon>
        <taxon>Pentapetalae</taxon>
        <taxon>rosids</taxon>
        <taxon>malvids</taxon>
        <taxon>Brassicales</taxon>
        <taxon>Brassicaceae</taxon>
        <taxon>Camelineae</taxon>
        <taxon>Arabidopsis</taxon>
    </lineage>
</organism>
<feature type="signal peptide" evidence="2">
    <location>
        <begin position="1"/>
        <end position="22"/>
    </location>
</feature>
<feature type="chain" id="PRO_0000010814" description="Germin-like protein subfamily 1 member 14">
    <location>
        <begin position="23"/>
        <end position="222"/>
    </location>
</feature>
<feature type="domain" description="Cupin type-1" evidence="2">
    <location>
        <begin position="63"/>
        <end position="214"/>
    </location>
</feature>
<feature type="binding site" evidence="1">
    <location>
        <position position="111"/>
    </location>
    <ligand>
        <name>Mn(2+)</name>
        <dbReference type="ChEBI" id="CHEBI:29035"/>
    </ligand>
</feature>
<feature type="binding site" evidence="1">
    <location>
        <position position="113"/>
    </location>
    <ligand>
        <name>Mn(2+)</name>
        <dbReference type="ChEBI" id="CHEBI:29035"/>
    </ligand>
</feature>
<feature type="binding site" evidence="1">
    <location>
        <position position="118"/>
    </location>
    <ligand>
        <name>Mn(2+)</name>
        <dbReference type="ChEBI" id="CHEBI:29035"/>
    </ligand>
</feature>
<feature type="binding site" evidence="1">
    <location>
        <position position="160"/>
    </location>
    <ligand>
        <name>Mn(2+)</name>
        <dbReference type="ChEBI" id="CHEBI:29035"/>
    </ligand>
</feature>
<feature type="glycosylation site" description="N-linked (GlcNAc...) asparagine" evidence="2">
    <location>
        <position position="78"/>
    </location>
</feature>
<feature type="disulfide bond" evidence="1">
    <location>
        <begin position="32"/>
        <end position="49"/>
    </location>
</feature>
<dbReference type="EMBL" id="AB016892">
    <property type="protein sequence ID" value="BAB10832.1"/>
    <property type="molecule type" value="Genomic_DNA"/>
</dbReference>
<dbReference type="EMBL" id="CP002688">
    <property type="protein sequence ID" value="AED94395.1"/>
    <property type="molecule type" value="Genomic_DNA"/>
</dbReference>
<dbReference type="RefSeq" id="NP_198727.1">
    <property type="nucleotide sequence ID" value="NM_123273.2"/>
</dbReference>
<dbReference type="SMR" id="Q9FID0"/>
<dbReference type="FunCoup" id="Q9FID0">
    <property type="interactions" value="266"/>
</dbReference>
<dbReference type="STRING" id="3702.Q9FID0"/>
<dbReference type="GlyGen" id="Q9FID0">
    <property type="glycosylation" value="1 site"/>
</dbReference>
<dbReference type="PaxDb" id="3702-AT5G39110.1"/>
<dbReference type="ProteomicsDB" id="230456"/>
<dbReference type="EnsemblPlants" id="AT5G39110.1">
    <property type="protein sequence ID" value="AT5G39110.1"/>
    <property type="gene ID" value="AT5G39110"/>
</dbReference>
<dbReference type="GeneID" id="833904"/>
<dbReference type="Gramene" id="AT5G39110.1">
    <property type="protein sequence ID" value="AT5G39110.1"/>
    <property type="gene ID" value="AT5G39110"/>
</dbReference>
<dbReference type="KEGG" id="ath:AT5G39110"/>
<dbReference type="Araport" id="AT5G39110"/>
<dbReference type="TAIR" id="AT5G39110"/>
<dbReference type="eggNOG" id="ENOG502QQ4A">
    <property type="taxonomic scope" value="Eukaryota"/>
</dbReference>
<dbReference type="HOGENOM" id="CLU_015790_0_0_1"/>
<dbReference type="InParanoid" id="Q9FID0"/>
<dbReference type="OMA" id="KAEDFYY"/>
<dbReference type="PhylomeDB" id="Q9FID0"/>
<dbReference type="PRO" id="PR:Q9FID0"/>
<dbReference type="Proteomes" id="UP000006548">
    <property type="component" value="Chromosome 5"/>
</dbReference>
<dbReference type="ExpressionAtlas" id="Q9FID0">
    <property type="expression patterns" value="baseline and differential"/>
</dbReference>
<dbReference type="GO" id="GO:0048046">
    <property type="term" value="C:apoplast"/>
    <property type="evidence" value="ECO:0007669"/>
    <property type="project" value="UniProtKB-SubCell"/>
</dbReference>
<dbReference type="GO" id="GO:0030145">
    <property type="term" value="F:manganese ion binding"/>
    <property type="evidence" value="ECO:0007669"/>
    <property type="project" value="InterPro"/>
</dbReference>
<dbReference type="CDD" id="cd02241">
    <property type="entry name" value="cupin_OxOx"/>
    <property type="match status" value="1"/>
</dbReference>
<dbReference type="FunFam" id="2.60.120.10:FF:000005">
    <property type="entry name" value="Germin-like protein subfamily 1 member 8"/>
    <property type="match status" value="1"/>
</dbReference>
<dbReference type="Gene3D" id="2.60.120.10">
    <property type="entry name" value="Jelly Rolls"/>
    <property type="match status" value="1"/>
</dbReference>
<dbReference type="InterPro" id="IPR006045">
    <property type="entry name" value="Cupin_1"/>
</dbReference>
<dbReference type="InterPro" id="IPR001929">
    <property type="entry name" value="Germin"/>
</dbReference>
<dbReference type="InterPro" id="IPR019780">
    <property type="entry name" value="Germin_Mn-BS"/>
</dbReference>
<dbReference type="InterPro" id="IPR014710">
    <property type="entry name" value="RmlC-like_jellyroll"/>
</dbReference>
<dbReference type="InterPro" id="IPR011051">
    <property type="entry name" value="RmlC_Cupin_sf"/>
</dbReference>
<dbReference type="PANTHER" id="PTHR31238">
    <property type="entry name" value="GERMIN-LIKE PROTEIN SUBFAMILY 3 MEMBER 3"/>
    <property type="match status" value="1"/>
</dbReference>
<dbReference type="Pfam" id="PF00190">
    <property type="entry name" value="Cupin_1"/>
    <property type="match status" value="1"/>
</dbReference>
<dbReference type="PRINTS" id="PR00325">
    <property type="entry name" value="GERMIN"/>
</dbReference>
<dbReference type="SMART" id="SM00835">
    <property type="entry name" value="Cupin_1"/>
    <property type="match status" value="1"/>
</dbReference>
<dbReference type="SUPFAM" id="SSF51182">
    <property type="entry name" value="RmlC-like cupins"/>
    <property type="match status" value="1"/>
</dbReference>
<dbReference type="PROSITE" id="PS00725">
    <property type="entry name" value="GERMIN"/>
    <property type="match status" value="1"/>
</dbReference>
<keyword id="KW-0052">Apoplast</keyword>
<keyword id="KW-1015">Disulfide bond</keyword>
<keyword id="KW-0325">Glycoprotein</keyword>
<keyword id="KW-0464">Manganese</keyword>
<keyword id="KW-0479">Metal-binding</keyword>
<keyword id="KW-1185">Reference proteome</keyword>
<keyword id="KW-0964">Secreted</keyword>
<keyword id="KW-0732">Signal</keyword>
<name>GL114_ARATH</name>
<evidence type="ECO:0000250" key="1"/>
<evidence type="ECO:0000255" key="2"/>
<evidence type="ECO:0000305" key="3"/>
<sequence length="222" mass="23913">MRFSKSLILITLSALVISFAEANDPSPLQDFCVAIGDLKNGVFVNGKFCKDPKQAKAEDFFYSGLNQAGTTNNKVKSNVTTVNVDQIPGLNTLGISLVRIDYAPYGQNPPHTHPRATEILVLVEGTLYVGFVSSNQDNNRLFAKVLNPGDVFVFPIGMIHFQVNIGKTPAVAFAGLSSQNAGVITIADTVFGSTPPINPDILAQAFQLDVNVVKDLEAKFKN</sequence>